<protein>
    <recommendedName>
        <fullName evidence="1">2,3-bisphosphoglycerate-dependent phosphoglycerate mutase</fullName>
        <shortName evidence="1">BPG-dependent PGAM</shortName>
        <shortName evidence="1">PGAM</shortName>
        <shortName evidence="1">Phosphoglyceromutase</shortName>
        <shortName evidence="1">dPGM</shortName>
        <ecNumber evidence="1">5.4.2.11</ecNumber>
    </recommendedName>
</protein>
<sequence>MELVFIRHGFSEWNAKNLFTGWRDVNLTERGVEEAKAAGKKLLDKGYEFDIAFTSVLTRAIKTCNIVLEESHQLWIPQVKNWRLNERHYGALQGLDKKATAEQYGDEQVHIWRRSYDISPPDLDPQDPNSAHNDRRYANIPSDVVPNAENLKLTLERALPFWEDQIAPAMLSGKRVLVVAHGNSLRALAKHIIGISDAEIMDFEIPTGQPLVLKLDDKLNYVEHYYL</sequence>
<keyword id="KW-0312">Gluconeogenesis</keyword>
<keyword id="KW-0324">Glycolysis</keyword>
<keyword id="KW-0413">Isomerase</keyword>
<gene>
    <name evidence="1" type="primary">gpmA</name>
    <name type="ordered locus">NTHI0916</name>
</gene>
<reference key="1">
    <citation type="journal article" date="2005" name="J. Bacteriol.">
        <title>Genomic sequence of an otitis media isolate of nontypeable Haemophilus influenzae: comparative study with H. influenzae serotype d, strain KW20.</title>
        <authorList>
            <person name="Harrison A."/>
            <person name="Dyer D.W."/>
            <person name="Gillaspy A."/>
            <person name="Ray W.C."/>
            <person name="Mungur R."/>
            <person name="Carson M.B."/>
            <person name="Zhong H."/>
            <person name="Gipson J."/>
            <person name="Gipson M."/>
            <person name="Johnson L.S."/>
            <person name="Lewis L."/>
            <person name="Bakaletz L.O."/>
            <person name="Munson R.S. Jr."/>
        </authorList>
    </citation>
    <scope>NUCLEOTIDE SEQUENCE [LARGE SCALE GENOMIC DNA]</scope>
    <source>
        <strain>86-028NP</strain>
    </source>
</reference>
<dbReference type="EC" id="5.4.2.11" evidence="1"/>
<dbReference type="EMBL" id="CP000057">
    <property type="protein sequence ID" value="AAX87805.1"/>
    <property type="molecule type" value="Genomic_DNA"/>
</dbReference>
<dbReference type="RefSeq" id="WP_005652337.1">
    <property type="nucleotide sequence ID" value="NC_007146.2"/>
</dbReference>
<dbReference type="SMR" id="Q4QME2"/>
<dbReference type="KEGG" id="hit:NTHI0916"/>
<dbReference type="HOGENOM" id="CLU_033323_1_5_6"/>
<dbReference type="UniPathway" id="UPA00109">
    <property type="reaction ID" value="UER00186"/>
</dbReference>
<dbReference type="Proteomes" id="UP000002525">
    <property type="component" value="Chromosome"/>
</dbReference>
<dbReference type="GO" id="GO:0004619">
    <property type="term" value="F:phosphoglycerate mutase activity"/>
    <property type="evidence" value="ECO:0007669"/>
    <property type="project" value="UniProtKB-EC"/>
</dbReference>
<dbReference type="GO" id="GO:0006094">
    <property type="term" value="P:gluconeogenesis"/>
    <property type="evidence" value="ECO:0007669"/>
    <property type="project" value="UniProtKB-UniRule"/>
</dbReference>
<dbReference type="GO" id="GO:0006096">
    <property type="term" value="P:glycolytic process"/>
    <property type="evidence" value="ECO:0007669"/>
    <property type="project" value="UniProtKB-UniRule"/>
</dbReference>
<dbReference type="CDD" id="cd07067">
    <property type="entry name" value="HP_PGM_like"/>
    <property type="match status" value="1"/>
</dbReference>
<dbReference type="FunFam" id="3.40.50.1240:FF:000003">
    <property type="entry name" value="2,3-bisphosphoglycerate-dependent phosphoglycerate mutase"/>
    <property type="match status" value="1"/>
</dbReference>
<dbReference type="Gene3D" id="3.40.50.1240">
    <property type="entry name" value="Phosphoglycerate mutase-like"/>
    <property type="match status" value="1"/>
</dbReference>
<dbReference type="HAMAP" id="MF_01039">
    <property type="entry name" value="PGAM_GpmA"/>
    <property type="match status" value="1"/>
</dbReference>
<dbReference type="InterPro" id="IPR013078">
    <property type="entry name" value="His_Pase_superF_clade-1"/>
</dbReference>
<dbReference type="InterPro" id="IPR029033">
    <property type="entry name" value="His_PPase_superfam"/>
</dbReference>
<dbReference type="InterPro" id="IPR005952">
    <property type="entry name" value="Phosphogly_mut1"/>
</dbReference>
<dbReference type="NCBIfam" id="TIGR01258">
    <property type="entry name" value="pgm_1"/>
    <property type="match status" value="1"/>
</dbReference>
<dbReference type="NCBIfam" id="NF010713">
    <property type="entry name" value="PRK14115.1"/>
    <property type="match status" value="1"/>
</dbReference>
<dbReference type="NCBIfam" id="NF010716">
    <property type="entry name" value="PRK14118.1"/>
    <property type="match status" value="1"/>
</dbReference>
<dbReference type="PANTHER" id="PTHR11931">
    <property type="entry name" value="PHOSPHOGLYCERATE MUTASE"/>
    <property type="match status" value="1"/>
</dbReference>
<dbReference type="Pfam" id="PF00300">
    <property type="entry name" value="His_Phos_1"/>
    <property type="match status" value="2"/>
</dbReference>
<dbReference type="PIRSF" id="PIRSF000709">
    <property type="entry name" value="6PFK_2-Ptase"/>
    <property type="match status" value="1"/>
</dbReference>
<dbReference type="SMART" id="SM00855">
    <property type="entry name" value="PGAM"/>
    <property type="match status" value="1"/>
</dbReference>
<dbReference type="SUPFAM" id="SSF53254">
    <property type="entry name" value="Phosphoglycerate mutase-like"/>
    <property type="match status" value="1"/>
</dbReference>
<name>GPMA_HAEI8</name>
<evidence type="ECO:0000255" key="1">
    <source>
        <dbReference type="HAMAP-Rule" id="MF_01039"/>
    </source>
</evidence>
<accession>Q4QME2</accession>
<proteinExistence type="inferred from homology"/>
<comment type="function">
    <text evidence="1">Catalyzes the interconversion of 2-phosphoglycerate and 3-phosphoglycerate.</text>
</comment>
<comment type="catalytic activity">
    <reaction evidence="1">
        <text>(2R)-2-phosphoglycerate = (2R)-3-phosphoglycerate</text>
        <dbReference type="Rhea" id="RHEA:15901"/>
        <dbReference type="ChEBI" id="CHEBI:58272"/>
        <dbReference type="ChEBI" id="CHEBI:58289"/>
        <dbReference type="EC" id="5.4.2.11"/>
    </reaction>
</comment>
<comment type="pathway">
    <text evidence="1">Carbohydrate degradation; glycolysis; pyruvate from D-glyceraldehyde 3-phosphate: step 3/5.</text>
</comment>
<comment type="subunit">
    <text evidence="1">Homodimer.</text>
</comment>
<comment type="similarity">
    <text evidence="1">Belongs to the phosphoglycerate mutase family. BPG-dependent PGAM subfamily.</text>
</comment>
<feature type="chain" id="PRO_0000229122" description="2,3-bisphosphoglycerate-dependent phosphoglycerate mutase">
    <location>
        <begin position="1"/>
        <end position="227"/>
    </location>
</feature>
<feature type="active site" description="Tele-phosphohistidine intermediate" evidence="1">
    <location>
        <position position="8"/>
    </location>
</feature>
<feature type="active site" description="Proton donor/acceptor" evidence="1">
    <location>
        <position position="86"/>
    </location>
</feature>
<feature type="binding site" evidence="1">
    <location>
        <begin position="7"/>
        <end position="14"/>
    </location>
    <ligand>
        <name>substrate</name>
    </ligand>
</feature>
<feature type="binding site" evidence="1">
    <location>
        <begin position="20"/>
        <end position="21"/>
    </location>
    <ligand>
        <name>substrate</name>
    </ligand>
</feature>
<feature type="binding site" evidence="1">
    <location>
        <position position="59"/>
    </location>
    <ligand>
        <name>substrate</name>
    </ligand>
</feature>
<feature type="binding site" evidence="1">
    <location>
        <begin position="86"/>
        <end position="89"/>
    </location>
    <ligand>
        <name>substrate</name>
    </ligand>
</feature>
<feature type="binding site" evidence="1">
    <location>
        <position position="97"/>
    </location>
    <ligand>
        <name>substrate</name>
    </ligand>
</feature>
<feature type="binding site" evidence="1">
    <location>
        <begin position="113"/>
        <end position="114"/>
    </location>
    <ligand>
        <name>substrate</name>
    </ligand>
</feature>
<feature type="binding site" evidence="1">
    <location>
        <begin position="182"/>
        <end position="183"/>
    </location>
    <ligand>
        <name>substrate</name>
    </ligand>
</feature>
<feature type="site" description="Transition state stabilizer" evidence="1">
    <location>
        <position position="181"/>
    </location>
</feature>
<organism>
    <name type="scientific">Haemophilus influenzae (strain 86-028NP)</name>
    <dbReference type="NCBI Taxonomy" id="281310"/>
    <lineage>
        <taxon>Bacteria</taxon>
        <taxon>Pseudomonadati</taxon>
        <taxon>Pseudomonadota</taxon>
        <taxon>Gammaproteobacteria</taxon>
        <taxon>Pasteurellales</taxon>
        <taxon>Pasteurellaceae</taxon>
        <taxon>Haemophilus</taxon>
    </lineage>
</organism>